<sequence length="218" mass="25577">MPMTLGYWDIRGLAHAIRLLLEYTDSSYEEKKYTMGDAPDYDRSQWLNEKFKLGLDFPNLPYLIDGTHKITQSNAILRYIARKHNLCGETEEEKIRVDILENQAMDVSNQLARVCYSPDFEKLKPEYLEGLPTMMQHFSQFLGKRPWFVGDKITFVDFLAYDVLDLHRIFEPKCLDAFPNLKDFISHFEGLEKISAYMKSSRFLPKPLYTRVAVWGNK</sequence>
<accession>Q9TSM5</accession>
<proteinExistence type="evidence at transcript level"/>
<name>GSTM1_MACFA</name>
<dbReference type="EC" id="2.5.1.18" evidence="2"/>
<dbReference type="EMBL" id="AF200709">
    <property type="protein sequence ID" value="AAF08539.1"/>
    <property type="molecule type" value="mRNA"/>
</dbReference>
<dbReference type="SMR" id="Q9TSM5"/>
<dbReference type="eggNOG" id="KOG1695">
    <property type="taxonomic scope" value="Eukaryota"/>
</dbReference>
<dbReference type="Proteomes" id="UP000233100">
    <property type="component" value="Unplaced"/>
</dbReference>
<dbReference type="GO" id="GO:0005737">
    <property type="term" value="C:cytoplasm"/>
    <property type="evidence" value="ECO:0007669"/>
    <property type="project" value="UniProtKB-SubCell"/>
</dbReference>
<dbReference type="GO" id="GO:0045171">
    <property type="term" value="C:intercellular bridge"/>
    <property type="evidence" value="ECO:0007669"/>
    <property type="project" value="UniProtKB-ARBA"/>
</dbReference>
<dbReference type="GO" id="GO:0004364">
    <property type="term" value="F:glutathione transferase activity"/>
    <property type="evidence" value="ECO:0000250"/>
    <property type="project" value="UniProtKB"/>
</dbReference>
<dbReference type="GO" id="GO:0042802">
    <property type="term" value="F:identical protein binding"/>
    <property type="evidence" value="ECO:0007669"/>
    <property type="project" value="UniProtKB-ARBA"/>
</dbReference>
<dbReference type="GO" id="GO:1901687">
    <property type="term" value="P:glutathione derivative biosynthetic process"/>
    <property type="evidence" value="ECO:0000250"/>
    <property type="project" value="UniProtKB"/>
</dbReference>
<dbReference type="GO" id="GO:0006749">
    <property type="term" value="P:glutathione metabolic process"/>
    <property type="evidence" value="ECO:0007669"/>
    <property type="project" value="UniProtKB-ARBA"/>
</dbReference>
<dbReference type="GO" id="GO:0051122">
    <property type="term" value="P:hepoxilin biosynthetic process"/>
    <property type="evidence" value="ECO:0000250"/>
    <property type="project" value="UniProtKB"/>
</dbReference>
<dbReference type="GO" id="GO:0006693">
    <property type="term" value="P:prostaglandin metabolic process"/>
    <property type="evidence" value="ECO:0000250"/>
    <property type="project" value="UniProtKB"/>
</dbReference>
<dbReference type="CDD" id="cd03209">
    <property type="entry name" value="GST_C_Mu"/>
    <property type="match status" value="1"/>
</dbReference>
<dbReference type="CDD" id="cd03075">
    <property type="entry name" value="GST_N_Mu"/>
    <property type="match status" value="1"/>
</dbReference>
<dbReference type="FunFam" id="3.40.30.10:FF:000603">
    <property type="entry name" value="Glutathione S-transferase Mu 1"/>
    <property type="match status" value="1"/>
</dbReference>
<dbReference type="FunFam" id="1.20.1050.10:FF:000101">
    <property type="entry name" value="Glutathione S-transferase Mu 4"/>
    <property type="match status" value="1"/>
</dbReference>
<dbReference type="Gene3D" id="1.20.1050.10">
    <property type="match status" value="1"/>
</dbReference>
<dbReference type="Gene3D" id="3.40.30.10">
    <property type="entry name" value="Glutaredoxin"/>
    <property type="match status" value="1"/>
</dbReference>
<dbReference type="InterPro" id="IPR010987">
    <property type="entry name" value="Glutathione-S-Trfase_C-like"/>
</dbReference>
<dbReference type="InterPro" id="IPR036282">
    <property type="entry name" value="Glutathione-S-Trfase_C_sf"/>
</dbReference>
<dbReference type="InterPro" id="IPR040079">
    <property type="entry name" value="Glutathione_S-Trfase"/>
</dbReference>
<dbReference type="InterPro" id="IPR004045">
    <property type="entry name" value="Glutathione_S-Trfase_N"/>
</dbReference>
<dbReference type="InterPro" id="IPR004046">
    <property type="entry name" value="GST_C"/>
</dbReference>
<dbReference type="InterPro" id="IPR003081">
    <property type="entry name" value="GST_mu"/>
</dbReference>
<dbReference type="InterPro" id="IPR050213">
    <property type="entry name" value="GST_superfamily"/>
</dbReference>
<dbReference type="InterPro" id="IPR036249">
    <property type="entry name" value="Thioredoxin-like_sf"/>
</dbReference>
<dbReference type="PANTHER" id="PTHR11571">
    <property type="entry name" value="GLUTATHIONE S-TRANSFERASE"/>
    <property type="match status" value="1"/>
</dbReference>
<dbReference type="PANTHER" id="PTHR11571:SF137">
    <property type="entry name" value="GLUTATHIONE S-TRANSFERASE MU 4"/>
    <property type="match status" value="1"/>
</dbReference>
<dbReference type="Pfam" id="PF00043">
    <property type="entry name" value="GST_C"/>
    <property type="match status" value="1"/>
</dbReference>
<dbReference type="Pfam" id="PF02798">
    <property type="entry name" value="GST_N"/>
    <property type="match status" value="1"/>
</dbReference>
<dbReference type="PRINTS" id="PR01267">
    <property type="entry name" value="GSTRNSFRASEM"/>
</dbReference>
<dbReference type="SFLD" id="SFLDG01205">
    <property type="entry name" value="AMPS.1"/>
    <property type="match status" value="1"/>
</dbReference>
<dbReference type="SFLD" id="SFLDS00019">
    <property type="entry name" value="Glutathione_Transferase_(cytos"/>
    <property type="match status" value="1"/>
</dbReference>
<dbReference type="SUPFAM" id="SSF47616">
    <property type="entry name" value="GST C-terminal domain-like"/>
    <property type="match status" value="1"/>
</dbReference>
<dbReference type="SUPFAM" id="SSF52833">
    <property type="entry name" value="Thioredoxin-like"/>
    <property type="match status" value="1"/>
</dbReference>
<dbReference type="PROSITE" id="PS50405">
    <property type="entry name" value="GST_CTER"/>
    <property type="match status" value="1"/>
</dbReference>
<dbReference type="PROSITE" id="PS50404">
    <property type="entry name" value="GST_NTER"/>
    <property type="match status" value="1"/>
</dbReference>
<keyword id="KW-0963">Cytoplasm</keyword>
<keyword id="KW-0443">Lipid metabolism</keyword>
<keyword id="KW-0597">Phosphoprotein</keyword>
<keyword id="KW-1185">Reference proteome</keyword>
<keyword id="KW-0808">Transferase</keyword>
<comment type="function">
    <text evidence="2">Conjugation of reduced glutathione to a wide number of exogenous and endogenous hydrophobic electrophiles. Involved in the formation of glutathione conjugates of both prostaglandin A2 (PGA2) and prostaglandin J2 (PGJ2). Participates in the formation of novel hepoxilin regioisomers.</text>
</comment>
<comment type="catalytic activity">
    <reaction evidence="2">
        <text>RX + glutathione = an S-substituted glutathione + a halide anion + H(+)</text>
        <dbReference type="Rhea" id="RHEA:16437"/>
        <dbReference type="ChEBI" id="CHEBI:15378"/>
        <dbReference type="ChEBI" id="CHEBI:16042"/>
        <dbReference type="ChEBI" id="CHEBI:17792"/>
        <dbReference type="ChEBI" id="CHEBI:57925"/>
        <dbReference type="ChEBI" id="CHEBI:90779"/>
        <dbReference type="EC" id="2.5.1.18"/>
    </reaction>
    <physiologicalReaction direction="left-to-right" evidence="2">
        <dbReference type="Rhea" id="RHEA:16438"/>
    </physiologicalReaction>
</comment>
<comment type="catalytic activity">
    <reaction evidence="2">
        <text>prostaglandin A2 + glutathione = prostaglandin A2-S-(R)-glutathione</text>
        <dbReference type="Rhea" id="RHEA:50796"/>
        <dbReference type="ChEBI" id="CHEBI:57925"/>
        <dbReference type="ChEBI" id="CHEBI:133370"/>
        <dbReference type="ChEBI" id="CHEBI:133768"/>
    </reaction>
    <physiologicalReaction direction="left-to-right" evidence="2">
        <dbReference type="Rhea" id="RHEA:50797"/>
    </physiologicalReaction>
</comment>
<comment type="catalytic activity">
    <reaction evidence="2">
        <text>prostaglandin J2 + glutathione = prostaglandin J2-S-(R)-glutathione</text>
        <dbReference type="Rhea" id="RHEA:50804"/>
        <dbReference type="ChEBI" id="CHEBI:57925"/>
        <dbReference type="ChEBI" id="CHEBI:133396"/>
        <dbReference type="ChEBI" id="CHEBI:133771"/>
    </reaction>
    <physiologicalReaction direction="left-to-right" evidence="2">
        <dbReference type="Rhea" id="RHEA:50805"/>
    </physiologicalReaction>
</comment>
<comment type="catalytic activity">
    <reaction evidence="2">
        <text>prostaglandin J2 + glutathione = prostaglandin J2-S-(S)-glutathione</text>
        <dbReference type="Rhea" id="RHEA:50808"/>
        <dbReference type="ChEBI" id="CHEBI:57925"/>
        <dbReference type="ChEBI" id="CHEBI:133396"/>
        <dbReference type="ChEBI" id="CHEBI:133772"/>
    </reaction>
    <physiologicalReaction direction="left-to-right" evidence="2">
        <dbReference type="Rhea" id="RHEA:50809"/>
    </physiologicalReaction>
</comment>
<comment type="catalytic activity">
    <reaction evidence="2">
        <text>prostaglandin A2 + glutathione = prostaglandin A2-S-(S)-glutathione</text>
        <dbReference type="Rhea" id="RHEA:50800"/>
        <dbReference type="ChEBI" id="CHEBI:57925"/>
        <dbReference type="ChEBI" id="CHEBI:133370"/>
        <dbReference type="ChEBI" id="CHEBI:133769"/>
    </reaction>
    <physiologicalReaction direction="left-to-right" evidence="2">
        <dbReference type="Rhea" id="RHEA:50801"/>
    </physiologicalReaction>
</comment>
<comment type="catalytic activity">
    <reaction evidence="2">
        <text>11(S)-hydroxy-14(S),15(S)-epoxy-(5Z,8Z,12E)-eicosatrienoate + glutathione = (11S,15S)-dihydroxy-14(R)-S-glutathionyl-(5Z,8Z,12E)-eicosatrienoate</text>
        <dbReference type="Rhea" id="RHEA:50260"/>
        <dbReference type="ChEBI" id="CHEBI:57925"/>
        <dbReference type="ChEBI" id="CHEBI:132200"/>
        <dbReference type="ChEBI" id="CHEBI:132201"/>
    </reaction>
    <physiologicalReaction direction="left-to-right" evidence="2">
        <dbReference type="Rhea" id="RHEA:50261"/>
    </physiologicalReaction>
</comment>
<comment type="subunit">
    <text evidence="1">Homodimer.</text>
</comment>
<comment type="subcellular location">
    <subcellularLocation>
        <location evidence="1">Cytoplasm</location>
    </subcellularLocation>
</comment>
<comment type="similarity">
    <text evidence="4">Belongs to the GST superfamily. Mu family.</text>
</comment>
<feature type="chain" id="PRO_0000185817" description="Glutathione S-transferase Mu 1">
    <location>
        <begin position="1"/>
        <end position="218"/>
    </location>
</feature>
<feature type="domain" description="GST N-terminal">
    <location>
        <begin position="2"/>
        <end position="88"/>
    </location>
</feature>
<feature type="domain" description="GST C-terminal">
    <location>
        <begin position="90"/>
        <end position="208"/>
    </location>
</feature>
<feature type="binding site" evidence="2">
    <location>
        <begin position="7"/>
        <end position="8"/>
    </location>
    <ligand>
        <name>glutathione</name>
        <dbReference type="ChEBI" id="CHEBI:57925"/>
    </ligand>
</feature>
<feature type="binding site" evidence="2">
    <location>
        <begin position="43"/>
        <end position="46"/>
    </location>
    <ligand>
        <name>glutathione</name>
        <dbReference type="ChEBI" id="CHEBI:57925"/>
    </ligand>
</feature>
<feature type="binding site" evidence="2">
    <location>
        <position position="50"/>
    </location>
    <ligand>
        <name>glutathione</name>
        <dbReference type="ChEBI" id="CHEBI:57925"/>
    </ligand>
</feature>
<feature type="binding site" evidence="2">
    <location>
        <begin position="59"/>
        <end position="60"/>
    </location>
    <ligand>
        <name>glutathione</name>
        <dbReference type="ChEBI" id="CHEBI:57925"/>
    </ligand>
</feature>
<feature type="binding site" evidence="2">
    <location>
        <begin position="72"/>
        <end position="73"/>
    </location>
    <ligand>
        <name>glutathione</name>
        <dbReference type="ChEBI" id="CHEBI:57925"/>
    </ligand>
</feature>
<feature type="binding site" evidence="1">
    <location>
        <position position="116"/>
    </location>
    <ligand>
        <name>substrate</name>
    </ligand>
</feature>
<feature type="modified residue" description="Phosphothreonine" evidence="3">
    <location>
        <position position="34"/>
    </location>
</feature>
<reference key="1">
    <citation type="journal article" date="2000" name="Toxicol. Sci.">
        <title>Mu-class GSTs are responsible for aflatoxin B(1)-8,9-epoxide-conjugating activity in the nonhuman primate Macaca fascicularis liver.</title>
        <authorList>
            <person name="Wang C."/>
            <person name="Bammler T.K."/>
            <person name="Guo Y."/>
            <person name="Kelly E.J."/>
            <person name="Eaton D.L."/>
        </authorList>
    </citation>
    <scope>NUCLEOTIDE SEQUENCE [MRNA]</scope>
    <source>
        <tissue>Liver</tissue>
    </source>
</reference>
<gene>
    <name type="primary">GSTM1</name>
</gene>
<organism>
    <name type="scientific">Macaca fascicularis</name>
    <name type="common">Crab-eating macaque</name>
    <name type="synonym">Cynomolgus monkey</name>
    <dbReference type="NCBI Taxonomy" id="9541"/>
    <lineage>
        <taxon>Eukaryota</taxon>
        <taxon>Metazoa</taxon>
        <taxon>Chordata</taxon>
        <taxon>Craniata</taxon>
        <taxon>Vertebrata</taxon>
        <taxon>Euteleostomi</taxon>
        <taxon>Mammalia</taxon>
        <taxon>Eutheria</taxon>
        <taxon>Euarchontoglires</taxon>
        <taxon>Primates</taxon>
        <taxon>Haplorrhini</taxon>
        <taxon>Catarrhini</taxon>
        <taxon>Cercopithecidae</taxon>
        <taxon>Cercopithecinae</taxon>
        <taxon>Macaca</taxon>
    </lineage>
</organism>
<protein>
    <recommendedName>
        <fullName evidence="4">Glutathione S-transferase Mu 1</fullName>
        <ecNumber evidence="2">2.5.1.18</ecNumber>
    </recommendedName>
    <alternativeName>
        <fullName>GST class-mu 1</fullName>
    </alternativeName>
    <alternativeName>
        <fullName>GSTM1-1</fullName>
    </alternativeName>
</protein>
<evidence type="ECO:0000250" key="1"/>
<evidence type="ECO:0000250" key="2">
    <source>
        <dbReference type="UniProtKB" id="P09488"/>
    </source>
</evidence>
<evidence type="ECO:0000250" key="3">
    <source>
        <dbReference type="UniProtKB" id="P10649"/>
    </source>
</evidence>
<evidence type="ECO:0000305" key="4"/>